<gene>
    <name type="primary">npas4b</name>
    <name type="ORF">si:dkey-17e16.11</name>
</gene>
<dbReference type="EMBL" id="CR388166">
    <property type="status" value="NOT_ANNOTATED_CDS"/>
    <property type="molecule type" value="Genomic_DNA"/>
</dbReference>
<dbReference type="RefSeq" id="NP_001410783.1">
    <property type="nucleotide sequence ID" value="NM_001423854.1"/>
</dbReference>
<dbReference type="RefSeq" id="XP_009293710.2">
    <property type="nucleotide sequence ID" value="XM_009295435.2"/>
</dbReference>
<dbReference type="SMR" id="E7FFX1"/>
<dbReference type="FunCoup" id="E7FFX1">
    <property type="interactions" value="288"/>
</dbReference>
<dbReference type="STRING" id="7955.ENSDARP00000114984"/>
<dbReference type="PaxDb" id="7955-ENSDARP00000105317"/>
<dbReference type="GeneID" id="100534657"/>
<dbReference type="eggNOG" id="ENOG502QRXX">
    <property type="taxonomic scope" value="Eukaryota"/>
</dbReference>
<dbReference type="HOGENOM" id="CLU_013890_0_0_1"/>
<dbReference type="InParanoid" id="E7FFX1"/>
<dbReference type="OrthoDB" id="9978016at2759"/>
<dbReference type="PhylomeDB" id="E7FFX1"/>
<dbReference type="TreeFam" id="TF319684"/>
<dbReference type="PRO" id="PR:E7FFX1"/>
<dbReference type="Proteomes" id="UP000000437">
    <property type="component" value="Chromosome 21"/>
</dbReference>
<dbReference type="GO" id="GO:0005634">
    <property type="term" value="C:nucleus"/>
    <property type="evidence" value="ECO:0007669"/>
    <property type="project" value="UniProtKB-SubCell"/>
</dbReference>
<dbReference type="GO" id="GO:0098794">
    <property type="term" value="C:postsynapse"/>
    <property type="evidence" value="ECO:0007669"/>
    <property type="project" value="GOC"/>
</dbReference>
<dbReference type="GO" id="GO:0000981">
    <property type="term" value="F:DNA-binding transcription factor activity, RNA polymerase II-specific"/>
    <property type="evidence" value="ECO:0000250"/>
    <property type="project" value="UniProtKB"/>
</dbReference>
<dbReference type="GO" id="GO:0046983">
    <property type="term" value="F:protein dimerization activity"/>
    <property type="evidence" value="ECO:0007669"/>
    <property type="project" value="InterPro"/>
</dbReference>
<dbReference type="GO" id="GO:0000978">
    <property type="term" value="F:RNA polymerase II cis-regulatory region sequence-specific DNA binding"/>
    <property type="evidence" value="ECO:0000250"/>
    <property type="project" value="UniProtKB"/>
</dbReference>
<dbReference type="GO" id="GO:0030154">
    <property type="term" value="P:cell differentiation"/>
    <property type="evidence" value="ECO:0007669"/>
    <property type="project" value="UniProtKB-KW"/>
</dbReference>
<dbReference type="GO" id="GO:0060079">
    <property type="term" value="P:excitatory postsynaptic potential"/>
    <property type="evidence" value="ECO:0000250"/>
    <property type="project" value="UniProtKB"/>
</dbReference>
<dbReference type="GO" id="GO:0060080">
    <property type="term" value="P:inhibitory postsynaptic potential"/>
    <property type="evidence" value="ECO:0000250"/>
    <property type="project" value="UniProtKB"/>
</dbReference>
<dbReference type="GO" id="GO:1904862">
    <property type="term" value="P:inhibitory synapse assembly"/>
    <property type="evidence" value="ECO:0000250"/>
    <property type="project" value="UniProtKB"/>
</dbReference>
<dbReference type="GO" id="GO:0007612">
    <property type="term" value="P:learning"/>
    <property type="evidence" value="ECO:0000250"/>
    <property type="project" value="UniProtKB"/>
</dbReference>
<dbReference type="GO" id="GO:0007616">
    <property type="term" value="P:long-term memory"/>
    <property type="evidence" value="ECO:0000250"/>
    <property type="project" value="UniProtKB"/>
</dbReference>
<dbReference type="GO" id="GO:0045893">
    <property type="term" value="P:positive regulation of DNA-templated transcription"/>
    <property type="evidence" value="ECO:0000250"/>
    <property type="project" value="UniProtKB"/>
</dbReference>
<dbReference type="GO" id="GO:0045944">
    <property type="term" value="P:positive regulation of transcription by RNA polymerase II"/>
    <property type="evidence" value="ECO:0000250"/>
    <property type="project" value="UniProtKB"/>
</dbReference>
<dbReference type="GO" id="GO:0048167">
    <property type="term" value="P:regulation of synaptic plasticity"/>
    <property type="evidence" value="ECO:0000250"/>
    <property type="project" value="UniProtKB"/>
</dbReference>
<dbReference type="GO" id="GO:0032228">
    <property type="term" value="P:regulation of synaptic transmission, GABAergic"/>
    <property type="evidence" value="ECO:0000250"/>
    <property type="project" value="UniProtKB"/>
</dbReference>
<dbReference type="GO" id="GO:0007614">
    <property type="term" value="P:short-term memory"/>
    <property type="evidence" value="ECO:0000250"/>
    <property type="project" value="UniProtKB"/>
</dbReference>
<dbReference type="GO" id="GO:0035176">
    <property type="term" value="P:social behavior"/>
    <property type="evidence" value="ECO:0000250"/>
    <property type="project" value="UniProtKB"/>
</dbReference>
<dbReference type="CDD" id="cd19697">
    <property type="entry name" value="bHLH-PAS_NPAS4_PASD10"/>
    <property type="match status" value="1"/>
</dbReference>
<dbReference type="CDD" id="cd00130">
    <property type="entry name" value="PAS"/>
    <property type="match status" value="1"/>
</dbReference>
<dbReference type="Gene3D" id="3.30.450.20">
    <property type="entry name" value="PAS domain"/>
    <property type="match status" value="2"/>
</dbReference>
<dbReference type="InterPro" id="IPR011598">
    <property type="entry name" value="bHLH_dom"/>
</dbReference>
<dbReference type="InterPro" id="IPR056192">
    <property type="entry name" value="bHLH_NPAS4"/>
</dbReference>
<dbReference type="InterPro" id="IPR000014">
    <property type="entry name" value="PAS"/>
</dbReference>
<dbReference type="InterPro" id="IPR035965">
    <property type="entry name" value="PAS-like_dom_sf"/>
</dbReference>
<dbReference type="InterPro" id="IPR020891">
    <property type="entry name" value="UPF0758_CS"/>
</dbReference>
<dbReference type="PANTHER" id="PTHR23043">
    <property type="entry name" value="HYPOXIA-INDUCIBLE FACTOR 1 ALPHA"/>
    <property type="match status" value="1"/>
</dbReference>
<dbReference type="PANTHER" id="PTHR23043:SF24">
    <property type="entry name" value="NEURONAL PAS DOMAIN-CONTAINING PROTEIN 4"/>
    <property type="match status" value="1"/>
</dbReference>
<dbReference type="Pfam" id="PF23183">
    <property type="entry name" value="bHLH_NPAS4"/>
    <property type="match status" value="1"/>
</dbReference>
<dbReference type="Pfam" id="PF14598">
    <property type="entry name" value="PAS_11"/>
    <property type="match status" value="1"/>
</dbReference>
<dbReference type="SMART" id="SM00091">
    <property type="entry name" value="PAS"/>
    <property type="match status" value="2"/>
</dbReference>
<dbReference type="SUPFAM" id="SSF55785">
    <property type="entry name" value="PYP-like sensor domain (PAS domain)"/>
    <property type="match status" value="2"/>
</dbReference>
<dbReference type="PROSITE" id="PS50888">
    <property type="entry name" value="BHLH"/>
    <property type="match status" value="1"/>
</dbReference>
<dbReference type="PROSITE" id="PS50112">
    <property type="entry name" value="PAS"/>
    <property type="match status" value="1"/>
</dbReference>
<evidence type="ECO:0000250" key="1">
    <source>
        <dbReference type="UniProtKB" id="Q8BGD7"/>
    </source>
</evidence>
<evidence type="ECO:0000255" key="2">
    <source>
        <dbReference type="PROSITE-ProRule" id="PRU00140"/>
    </source>
</evidence>
<evidence type="ECO:0000255" key="3">
    <source>
        <dbReference type="PROSITE-ProRule" id="PRU00981"/>
    </source>
</evidence>
<evidence type="ECO:0000256" key="4">
    <source>
        <dbReference type="SAM" id="MobiDB-lite"/>
    </source>
</evidence>
<evidence type="ECO:0000305" key="5"/>
<proteinExistence type="inferred from homology"/>
<feature type="chain" id="PRO_0000438133" description="Neuronal PAS domain-containing protein 4B">
    <location>
        <begin position="1"/>
        <end position="844"/>
    </location>
</feature>
<feature type="domain" description="bHLH" evidence="3">
    <location>
        <begin position="61"/>
        <end position="114"/>
    </location>
</feature>
<feature type="domain" description="PAS 1" evidence="2">
    <location>
        <begin position="132"/>
        <end position="190"/>
    </location>
</feature>
<feature type="domain" description="PAS 2" evidence="2">
    <location>
        <begin position="294"/>
        <end position="343"/>
    </location>
</feature>
<feature type="region of interest" description="Basic motif; degenerate" evidence="3">
    <location>
        <begin position="61"/>
        <end position="74"/>
    </location>
</feature>
<feature type="region of interest" description="Helix-loop-helix motif" evidence="3">
    <location>
        <begin position="75"/>
        <end position="114"/>
    </location>
</feature>
<feature type="region of interest" description="Disordered" evidence="4">
    <location>
        <begin position="410"/>
        <end position="432"/>
    </location>
</feature>
<feature type="region of interest" description="Disordered" evidence="4">
    <location>
        <begin position="444"/>
        <end position="479"/>
    </location>
</feature>
<feature type="region of interest" description="Disordered" evidence="4">
    <location>
        <begin position="702"/>
        <end position="725"/>
    </location>
</feature>
<feature type="region of interest" description="Disordered" evidence="4">
    <location>
        <begin position="757"/>
        <end position="784"/>
    </location>
</feature>
<feature type="compositionally biased region" description="Polar residues" evidence="4">
    <location>
        <begin position="410"/>
        <end position="422"/>
    </location>
</feature>
<feature type="compositionally biased region" description="Pro residues" evidence="4">
    <location>
        <begin position="704"/>
        <end position="716"/>
    </location>
</feature>
<sequence length="844" mass="93724">MFSSESRPTVKLPDKWAKKRCFFQLLSSLSTTLKKLCSSSSHCSGFHLIIRPFQRFFGLEKMYRSTKGASKARRDQINAEIRSLKELLPISDADKARLSYLHIMSLACIYTRKSVFFSQAAAGHGMSGSLLSLPELSDLLHTLPGFLLVLTSEGKLLYLSDNVAEHLGHSMVDLVAQSDSVYDIIDPVDHFIMRGNLVPITTPDTDRLFRCRFSTSKFVRRQGSGNKQAIVRARCLPPPYHASPYWTSNPVWVCFCSPLEASMPQLSTSRNPLPTPPAEQSFLLSCFQSQHSRDMRIHTVQDSVSVYLGYDIETLRSRSWYSLIHPRDLSHASAQHCTLLHNGGERQVEMVVQVEAADHSWIWLYIVLQLETGEYPINSHNYVISESEAWSVRQQLHSEQNQLALLYQESRQSSDPLSSPDQVFTPSSSGLSSQSFDFSFITSGRSSSEELPGTSAPSSMTFDPLEGEEIDPQSHGGGHQMWRSAMTIAPEHLSNINLSTVPQSQVAPPPLPPFKAPPKRQRSEEFICTPPYTPRLSGGSFIFNDETLRPSDHSKSAKMRQSITSATNIGPAQPCRKRLYETLPPTPDSPGSDECILMALPEIRGPLYVDVPHLPFHAPPEGLLTPEASPTKKPCLSFFPREDETERERMEISLLAQYISTLAEGFCHNHPQGASAPPHHANSSLAHIDVLMFEEKAVDDIPLPNLPSPSPVPPSPYSSVPSYSQCRSSPVQEEAAVTLIGVNHLCSVQLTHCNRMTEGGLQDGERPDEDMEMMSSQRSSEAPALTPALPCAQSLLEELVTMEPVFGAAVPMTPADRQQDELYQLPHQGGPQMFYQDGTGDHMF</sequence>
<name>NPS4B_DANRE</name>
<keyword id="KW-0010">Activator</keyword>
<keyword id="KW-0221">Differentiation</keyword>
<keyword id="KW-0238">DNA-binding</keyword>
<keyword id="KW-0524">Neurogenesis</keyword>
<keyword id="KW-0539">Nucleus</keyword>
<keyword id="KW-1185">Reference proteome</keyword>
<keyword id="KW-0677">Repeat</keyword>
<keyword id="KW-0804">Transcription</keyword>
<keyword id="KW-0805">Transcription regulation</keyword>
<organism>
    <name type="scientific">Danio rerio</name>
    <name type="common">Zebrafish</name>
    <name type="synonym">Brachydanio rerio</name>
    <dbReference type="NCBI Taxonomy" id="7955"/>
    <lineage>
        <taxon>Eukaryota</taxon>
        <taxon>Metazoa</taxon>
        <taxon>Chordata</taxon>
        <taxon>Craniata</taxon>
        <taxon>Vertebrata</taxon>
        <taxon>Euteleostomi</taxon>
        <taxon>Actinopterygii</taxon>
        <taxon>Neopterygii</taxon>
        <taxon>Teleostei</taxon>
        <taxon>Ostariophysi</taxon>
        <taxon>Cypriniformes</taxon>
        <taxon>Danionidae</taxon>
        <taxon>Danioninae</taxon>
        <taxon>Danio</taxon>
    </lineage>
</organism>
<comment type="function">
    <text evidence="1">Transcription factor expressed in neurons of the brain that regulates the excitatory-inhibitory balance within neural circuits and is required for contextual memory in the hippocampus. Plays a key role in the structural and functional plasticity of neurons. Acts as an early-response transcription factor in both excitatory and inhibitory neurons, where it induces distinct but overlapping sets of late-response genes in these two types of neurons, allowing the synapses that form on inhibitory and excitatory neurons to be modified by neuronal activity in a manner specific to their function within a circuit, thereby facilitating appropriate circuit responses to sensory experience.</text>
</comment>
<comment type="subunit">
    <text evidence="1">Efficient DNA binding requires dimerization with another bHLH protein.</text>
</comment>
<comment type="subcellular location">
    <subcellularLocation>
        <location evidence="1 3">Nucleus</location>
    </subcellularLocation>
</comment>
<comment type="caution">
    <text evidence="3">Contains a degenerate basic motif not likely to bind DNA.</text>
</comment>
<protein>
    <recommendedName>
        <fullName evidence="5">Neuronal PAS domain-containing protein 4B</fullName>
    </recommendedName>
</protein>
<accession>E7FFX1</accession>
<accession>E9QDD8</accession>
<reference key="1">
    <citation type="journal article" date="2013" name="Nature">
        <title>The zebrafish reference genome sequence and its relationship to the human genome.</title>
        <authorList>
            <person name="Howe K."/>
            <person name="Clark M.D."/>
            <person name="Torroja C.F."/>
            <person name="Torrance J."/>
            <person name="Berthelot C."/>
            <person name="Muffato M."/>
            <person name="Collins J.E."/>
            <person name="Humphray S."/>
            <person name="McLaren K."/>
            <person name="Matthews L."/>
            <person name="McLaren S."/>
            <person name="Sealy I."/>
            <person name="Caccamo M."/>
            <person name="Churcher C."/>
            <person name="Scott C."/>
            <person name="Barrett J.C."/>
            <person name="Koch R."/>
            <person name="Rauch G.J."/>
            <person name="White S."/>
            <person name="Chow W."/>
            <person name="Kilian B."/>
            <person name="Quintais L.T."/>
            <person name="Guerra-Assuncao J.A."/>
            <person name="Zhou Y."/>
            <person name="Gu Y."/>
            <person name="Yen J."/>
            <person name="Vogel J.H."/>
            <person name="Eyre T."/>
            <person name="Redmond S."/>
            <person name="Banerjee R."/>
            <person name="Chi J."/>
            <person name="Fu B."/>
            <person name="Langley E."/>
            <person name="Maguire S.F."/>
            <person name="Laird G.K."/>
            <person name="Lloyd D."/>
            <person name="Kenyon E."/>
            <person name="Donaldson S."/>
            <person name="Sehra H."/>
            <person name="Almeida-King J."/>
            <person name="Loveland J."/>
            <person name="Trevanion S."/>
            <person name="Jones M."/>
            <person name="Quail M."/>
            <person name="Willey D."/>
            <person name="Hunt A."/>
            <person name="Burton J."/>
            <person name="Sims S."/>
            <person name="McLay K."/>
            <person name="Plumb B."/>
            <person name="Davis J."/>
            <person name="Clee C."/>
            <person name="Oliver K."/>
            <person name="Clark R."/>
            <person name="Riddle C."/>
            <person name="Elliot D."/>
            <person name="Threadgold G."/>
            <person name="Harden G."/>
            <person name="Ware D."/>
            <person name="Begum S."/>
            <person name="Mortimore B."/>
            <person name="Kerry G."/>
            <person name="Heath P."/>
            <person name="Phillimore B."/>
            <person name="Tracey A."/>
            <person name="Corby N."/>
            <person name="Dunn M."/>
            <person name="Johnson C."/>
            <person name="Wood J."/>
            <person name="Clark S."/>
            <person name="Pelan S."/>
            <person name="Griffiths G."/>
            <person name="Smith M."/>
            <person name="Glithero R."/>
            <person name="Howden P."/>
            <person name="Barker N."/>
            <person name="Lloyd C."/>
            <person name="Stevens C."/>
            <person name="Harley J."/>
            <person name="Holt K."/>
            <person name="Panagiotidis G."/>
            <person name="Lovell J."/>
            <person name="Beasley H."/>
            <person name="Henderson C."/>
            <person name="Gordon D."/>
            <person name="Auger K."/>
            <person name="Wright D."/>
            <person name="Collins J."/>
            <person name="Raisen C."/>
            <person name="Dyer L."/>
            <person name="Leung K."/>
            <person name="Robertson L."/>
            <person name="Ambridge K."/>
            <person name="Leongamornlert D."/>
            <person name="McGuire S."/>
            <person name="Gilderthorp R."/>
            <person name="Griffiths C."/>
            <person name="Manthravadi D."/>
            <person name="Nichol S."/>
            <person name="Barker G."/>
            <person name="Whitehead S."/>
            <person name="Kay M."/>
            <person name="Brown J."/>
            <person name="Murnane C."/>
            <person name="Gray E."/>
            <person name="Humphries M."/>
            <person name="Sycamore N."/>
            <person name="Barker D."/>
            <person name="Saunders D."/>
            <person name="Wallis J."/>
            <person name="Babbage A."/>
            <person name="Hammond S."/>
            <person name="Mashreghi-Mohammadi M."/>
            <person name="Barr L."/>
            <person name="Martin S."/>
            <person name="Wray P."/>
            <person name="Ellington A."/>
            <person name="Matthews N."/>
            <person name="Ellwood M."/>
            <person name="Woodmansey R."/>
            <person name="Clark G."/>
            <person name="Cooper J."/>
            <person name="Tromans A."/>
            <person name="Grafham D."/>
            <person name="Skuce C."/>
            <person name="Pandian R."/>
            <person name="Andrews R."/>
            <person name="Harrison E."/>
            <person name="Kimberley A."/>
            <person name="Garnett J."/>
            <person name="Fosker N."/>
            <person name="Hall R."/>
            <person name="Garner P."/>
            <person name="Kelly D."/>
            <person name="Bird C."/>
            <person name="Palmer S."/>
            <person name="Gehring I."/>
            <person name="Berger A."/>
            <person name="Dooley C.M."/>
            <person name="Ersan-Urun Z."/>
            <person name="Eser C."/>
            <person name="Geiger H."/>
            <person name="Geisler M."/>
            <person name="Karotki L."/>
            <person name="Kirn A."/>
            <person name="Konantz J."/>
            <person name="Konantz M."/>
            <person name="Oberlander M."/>
            <person name="Rudolph-Geiger S."/>
            <person name="Teucke M."/>
            <person name="Lanz C."/>
            <person name="Raddatz G."/>
            <person name="Osoegawa K."/>
            <person name="Zhu B."/>
            <person name="Rapp A."/>
            <person name="Widaa S."/>
            <person name="Langford C."/>
            <person name="Yang F."/>
            <person name="Schuster S.C."/>
            <person name="Carter N.P."/>
            <person name="Harrow J."/>
            <person name="Ning Z."/>
            <person name="Herrero J."/>
            <person name="Searle S.M."/>
            <person name="Enright A."/>
            <person name="Geisler R."/>
            <person name="Plasterk R.H."/>
            <person name="Lee C."/>
            <person name="Westerfield M."/>
            <person name="de Jong P.J."/>
            <person name="Zon L.I."/>
            <person name="Postlethwait J.H."/>
            <person name="Nusslein-Volhard C."/>
            <person name="Hubbard T.J."/>
            <person name="Roest Crollius H."/>
            <person name="Rogers J."/>
            <person name="Stemple D.L."/>
        </authorList>
    </citation>
    <scope>NUCLEOTIDE SEQUENCE [LARGE SCALE GENOMIC DNA]</scope>
    <source>
        <strain>Tuebingen</strain>
    </source>
</reference>